<dbReference type="EMBL" id="AY653733">
    <property type="protein sequence ID" value="AAV50622.1"/>
    <property type="molecule type" value="Genomic_DNA"/>
</dbReference>
<dbReference type="KEGG" id="vg:9924972"/>
<dbReference type="OrthoDB" id="22190at10239"/>
<dbReference type="Proteomes" id="UP000001134">
    <property type="component" value="Genome"/>
</dbReference>
<sequence>MANFDYYSFRVEYVTKHINKEIEFYTQTEYNLEKPISEYVSYLGTRIGKDRQEQTVISQYDIYGNKQEIKKMNLNEYAKDMEVMMFKKPWTKLKPFHKIMKIKTYIDTLSYDKKIKEDVISKNKEELIDEITKGLTEKKFGTKNKSEIVYDLDKMEITNISCVDYDKKKKLYYIDWDL</sequence>
<protein>
    <recommendedName>
        <fullName>Uncharacterized protein R353</fullName>
    </recommendedName>
</protein>
<keyword id="KW-1185">Reference proteome</keyword>
<reference key="1">
    <citation type="journal article" date="2004" name="Science">
        <title>The 1.2-megabase genome sequence of Mimivirus.</title>
        <authorList>
            <person name="Raoult D."/>
            <person name="Audic S."/>
            <person name="Robert C."/>
            <person name="Abergel C."/>
            <person name="Renesto P."/>
            <person name="Ogata H."/>
            <person name="La Scola B."/>
            <person name="Susan M."/>
            <person name="Claverie J.-M."/>
        </authorList>
    </citation>
    <scope>NUCLEOTIDE SEQUENCE [LARGE SCALE GENOMIC DNA]</scope>
    <source>
        <strain>Rowbotham-Bradford</strain>
    </source>
</reference>
<organism>
    <name type="scientific">Acanthamoeba polyphaga mimivirus</name>
    <name type="common">APMV</name>
    <dbReference type="NCBI Taxonomy" id="212035"/>
    <lineage>
        <taxon>Viruses</taxon>
        <taxon>Varidnaviria</taxon>
        <taxon>Bamfordvirae</taxon>
        <taxon>Nucleocytoviricota</taxon>
        <taxon>Megaviricetes</taxon>
        <taxon>Imitervirales</taxon>
        <taxon>Mimiviridae</taxon>
        <taxon>Megamimivirinae</taxon>
        <taxon>Mimivirus</taxon>
        <taxon>Mimivirus bradfordmassiliense</taxon>
    </lineage>
</organism>
<name>YR353_MIMIV</name>
<proteinExistence type="predicted"/>
<feature type="chain" id="PRO_0000071271" description="Uncharacterized protein R353">
    <location>
        <begin position="1"/>
        <end position="178"/>
    </location>
</feature>
<gene>
    <name type="ordered locus">MIMI_R353</name>
</gene>
<organismHost>
    <name type="scientific">Acanthamoeba polyphaga</name>
    <name type="common">Amoeba</name>
    <dbReference type="NCBI Taxonomy" id="5757"/>
</organismHost>
<accession>Q5UQT9</accession>